<feature type="chain" id="PRO_0000454866" description="L-2-hydroxyglutarate dehydrogenase">
    <location>
        <begin position="1"/>
        <end position="422"/>
    </location>
</feature>
<keyword id="KW-0997">Cell inner membrane</keyword>
<keyword id="KW-1003">Cell membrane</keyword>
<keyword id="KW-0249">Electron transport</keyword>
<keyword id="KW-0274">FAD</keyword>
<keyword id="KW-0285">Flavoprotein</keyword>
<keyword id="KW-0472">Membrane</keyword>
<keyword id="KW-0560">Oxidoreductase</keyword>
<keyword id="KW-0813">Transport</keyword>
<protein>
    <recommendedName>
        <fullName evidence="1">L-2-hydroxyglutarate dehydrogenase</fullName>
        <shortName evidence="1">L2HG dehydrogenase</shortName>
        <ecNumber evidence="1">1.1.5.13</ecNumber>
    </recommendedName>
    <alternativeName>
        <fullName evidence="1">L2HG:quinone oxidoreductase</fullName>
    </alternativeName>
</protein>
<name>LHGD_ECOLU</name>
<reference key="1">
    <citation type="journal article" date="2009" name="PLoS Genet.">
        <title>Organised genome dynamics in the Escherichia coli species results in highly diverse adaptive paths.</title>
        <authorList>
            <person name="Touchon M."/>
            <person name="Hoede C."/>
            <person name="Tenaillon O."/>
            <person name="Barbe V."/>
            <person name="Baeriswyl S."/>
            <person name="Bidet P."/>
            <person name="Bingen E."/>
            <person name="Bonacorsi S."/>
            <person name="Bouchier C."/>
            <person name="Bouvet O."/>
            <person name="Calteau A."/>
            <person name="Chiapello H."/>
            <person name="Clermont O."/>
            <person name="Cruveiller S."/>
            <person name="Danchin A."/>
            <person name="Diard M."/>
            <person name="Dossat C."/>
            <person name="Karoui M.E."/>
            <person name="Frapy E."/>
            <person name="Garry L."/>
            <person name="Ghigo J.M."/>
            <person name="Gilles A.M."/>
            <person name="Johnson J."/>
            <person name="Le Bouguenec C."/>
            <person name="Lescat M."/>
            <person name="Mangenot S."/>
            <person name="Martinez-Jehanne V."/>
            <person name="Matic I."/>
            <person name="Nassif X."/>
            <person name="Oztas S."/>
            <person name="Petit M.A."/>
            <person name="Pichon C."/>
            <person name="Rouy Z."/>
            <person name="Ruf C.S."/>
            <person name="Schneider D."/>
            <person name="Tourret J."/>
            <person name="Vacherie B."/>
            <person name="Vallenet D."/>
            <person name="Medigue C."/>
            <person name="Rocha E.P.C."/>
            <person name="Denamur E."/>
        </authorList>
    </citation>
    <scope>NUCLEOTIDE SEQUENCE [LARGE SCALE GENOMIC DNA]</scope>
    <source>
        <strain>UMN026 / ExPEC</strain>
    </source>
</reference>
<reference key="2">
    <citation type="journal article" date="2021" name="PLoS Comput. Biol.">
        <title>Experimental and computational investigation of enzyme functional annotations uncovers misannotation in the EC 1.1.3.15 enzyme class.</title>
        <authorList>
            <person name="Rembeza E."/>
            <person name="Engqvist M.K.M."/>
        </authorList>
    </citation>
    <scope>FUNCTION</scope>
    <scope>IN VITRO ACTIVITY</scope>
</reference>
<sequence>MYDFVIIGGGIIGMSTAMQLIDVYPDARIALLEKESGPACHQTGHNSGVIHAGVYYTPGSLKAQFCLAGNRATKAFCDQNGIRYDNCGKMLVATSELEMERMRALWERTAANGIEREWLNAEELREREPNITGLGGIFVPSSGIVSYREVTAAMAKIFQARGGEIIYNAEVSGLSEHKNGVVIRTRQGGEYEASTLISCSGLMADRLVKMLGLEPGFIICPFRGEYFRLAPEHNQIVNHLIYPIPDPAMPFLGVHLTRMIDGSVTVGPNAVLAFKREGYRKRDFSFSDTLEILGSSGIRRVLQNHLRSGLGEMKNSLCKSGYLRLVQKYCPRLSLSDLQPWPAGVRAQAVSPDGKLIDDFLFVTTPRTIHTCNAPSPAATSAIPIGAHIVSKVQTLLASQSNPGRTLRAARSVDALHAAFNQ</sequence>
<organism>
    <name type="scientific">Escherichia coli O17:K52:H18 (strain UMN026 / ExPEC)</name>
    <dbReference type="NCBI Taxonomy" id="585056"/>
    <lineage>
        <taxon>Bacteria</taxon>
        <taxon>Pseudomonadati</taxon>
        <taxon>Pseudomonadota</taxon>
        <taxon>Gammaproteobacteria</taxon>
        <taxon>Enterobacterales</taxon>
        <taxon>Enterobacteriaceae</taxon>
        <taxon>Escherichia</taxon>
    </lineage>
</organism>
<evidence type="ECO:0000255" key="1">
    <source>
        <dbReference type="HAMAP-Rule" id="MF_00990"/>
    </source>
</evidence>
<evidence type="ECO:0000269" key="2">
    <source>
    </source>
</evidence>
<evidence type="ECO:0000312" key="3">
    <source>
        <dbReference type="EMBL" id="CAR14155.1"/>
    </source>
</evidence>
<gene>
    <name evidence="3" type="primary">ygaF</name>
    <name evidence="1" type="synonym">lhgD</name>
    <name evidence="3" type="ordered locus">ECUMN_2984</name>
</gene>
<accession>B7N6P4</accession>
<dbReference type="EC" id="1.1.5.13" evidence="1"/>
<dbReference type="EMBL" id="CU928163">
    <property type="protein sequence ID" value="CAR14155.1"/>
    <property type="molecule type" value="Genomic_DNA"/>
</dbReference>
<dbReference type="RefSeq" id="YP_002413677.1">
    <property type="nucleotide sequence ID" value="NC_011751.1"/>
</dbReference>
<dbReference type="SMR" id="B7N6P4"/>
<dbReference type="STRING" id="585056.ECUMN_2984"/>
<dbReference type="KEGG" id="eum:ECUMN_2984"/>
<dbReference type="PATRIC" id="fig|585056.7.peg.3160"/>
<dbReference type="HOGENOM" id="CLU_024775_0_1_6"/>
<dbReference type="Proteomes" id="UP000007097">
    <property type="component" value="Chromosome"/>
</dbReference>
<dbReference type="GO" id="GO:0005737">
    <property type="term" value="C:cytoplasm"/>
    <property type="evidence" value="ECO:0007669"/>
    <property type="project" value="TreeGrafter"/>
</dbReference>
<dbReference type="GO" id="GO:0005886">
    <property type="term" value="C:plasma membrane"/>
    <property type="evidence" value="ECO:0007669"/>
    <property type="project" value="UniProtKB-SubCell"/>
</dbReference>
<dbReference type="GO" id="GO:0140696">
    <property type="term" value="F:(S)-2-hydroxyglutarate dehydrogenase activity"/>
    <property type="evidence" value="ECO:0007669"/>
    <property type="project" value="UniProtKB-EC"/>
</dbReference>
<dbReference type="GO" id="GO:0047545">
    <property type="term" value="F:2-hydroxyglutarate dehydrogenase activity"/>
    <property type="evidence" value="ECO:0007669"/>
    <property type="project" value="UniProtKB-UniRule"/>
</dbReference>
<dbReference type="GO" id="GO:0050660">
    <property type="term" value="F:flavin adenine dinucleotide binding"/>
    <property type="evidence" value="ECO:0007669"/>
    <property type="project" value="UniProtKB-UniRule"/>
</dbReference>
<dbReference type="GO" id="GO:0019477">
    <property type="term" value="P:L-lysine catabolic process"/>
    <property type="evidence" value="ECO:0007669"/>
    <property type="project" value="UniProtKB-UniRule"/>
</dbReference>
<dbReference type="Gene3D" id="3.30.9.10">
    <property type="entry name" value="D-Amino Acid Oxidase, subunit A, domain 2"/>
    <property type="match status" value="1"/>
</dbReference>
<dbReference type="Gene3D" id="3.50.50.60">
    <property type="entry name" value="FAD/NAD(P)-binding domain"/>
    <property type="match status" value="1"/>
</dbReference>
<dbReference type="HAMAP" id="MF_00990">
    <property type="entry name" value="L_hydroxyglutarate_dehydrogenase"/>
    <property type="match status" value="1"/>
</dbReference>
<dbReference type="InterPro" id="IPR006076">
    <property type="entry name" value="FAD-dep_OxRdtase"/>
</dbReference>
<dbReference type="InterPro" id="IPR036188">
    <property type="entry name" value="FAD/NAD-bd_sf"/>
</dbReference>
<dbReference type="InterPro" id="IPR030862">
    <property type="entry name" value="L2HG_DH_bact"/>
</dbReference>
<dbReference type="NCBIfam" id="NF008726">
    <property type="entry name" value="PRK11728.1"/>
    <property type="match status" value="1"/>
</dbReference>
<dbReference type="PANTHER" id="PTHR43104">
    <property type="entry name" value="L-2-HYDROXYGLUTARATE DEHYDROGENASE, MITOCHONDRIAL"/>
    <property type="match status" value="1"/>
</dbReference>
<dbReference type="PANTHER" id="PTHR43104:SF2">
    <property type="entry name" value="L-2-HYDROXYGLUTARATE DEHYDROGENASE, MITOCHONDRIAL"/>
    <property type="match status" value="1"/>
</dbReference>
<dbReference type="Pfam" id="PF01266">
    <property type="entry name" value="DAO"/>
    <property type="match status" value="1"/>
</dbReference>
<dbReference type="SUPFAM" id="SSF51905">
    <property type="entry name" value="FAD/NAD(P)-binding domain"/>
    <property type="match status" value="1"/>
</dbReference>
<comment type="function">
    <text evidence="1 2">Catalyzes the dehydrogenation of L-2-hydroxyglutarate (L2HG) to alpha-ketoglutarate and couples to the respiratory chain by feeding electrons from the reaction into the membrane quinone pool. Functions in a L-lysine degradation pathway that proceeds via cadaverine, glutarate and L-2-hydroxyglutarate (By similarity). Also displays some oxidase activity in vitro on L-2-hydroxyglutarate with O2 as the electron acceptor, but this activity is most likely not physiological (PubMed:34555022).</text>
</comment>
<comment type="catalytic activity">
    <reaction evidence="1">
        <text>(S)-2-hydroxyglutarate + a quinone = a quinol + 2-oxoglutarate</text>
        <dbReference type="Rhea" id="RHEA:58664"/>
        <dbReference type="ChEBI" id="CHEBI:16782"/>
        <dbReference type="ChEBI" id="CHEBI:16810"/>
        <dbReference type="ChEBI" id="CHEBI:24646"/>
        <dbReference type="ChEBI" id="CHEBI:132124"/>
        <dbReference type="EC" id="1.1.5.13"/>
    </reaction>
</comment>
<comment type="cofactor">
    <cofactor evidence="1">
        <name>FAD</name>
        <dbReference type="ChEBI" id="CHEBI:57692"/>
    </cofactor>
</comment>
<comment type="pathway">
    <text evidence="1">Amino-acid degradation.</text>
</comment>
<comment type="subcellular location">
    <subcellularLocation>
        <location evidence="1">Cell inner membrane</location>
    </subcellularLocation>
</comment>
<comment type="similarity">
    <text evidence="1">Belongs to the L2HGDH family.</text>
</comment>
<proteinExistence type="inferred from homology"/>